<name>RL13_SYNFM</name>
<dbReference type="EMBL" id="CP000478">
    <property type="protein sequence ID" value="ABK17356.1"/>
    <property type="molecule type" value="Genomic_DNA"/>
</dbReference>
<dbReference type="RefSeq" id="WP_011698526.1">
    <property type="nucleotide sequence ID" value="NC_008554.1"/>
</dbReference>
<dbReference type="SMR" id="A0LIV4"/>
<dbReference type="FunCoup" id="A0LIV4">
    <property type="interactions" value="670"/>
</dbReference>
<dbReference type="STRING" id="335543.Sfum_1669"/>
<dbReference type="KEGG" id="sfu:Sfum_1669"/>
<dbReference type="eggNOG" id="COG0102">
    <property type="taxonomic scope" value="Bacteria"/>
</dbReference>
<dbReference type="HOGENOM" id="CLU_082184_2_2_7"/>
<dbReference type="InParanoid" id="A0LIV4"/>
<dbReference type="OrthoDB" id="9801330at2"/>
<dbReference type="Proteomes" id="UP000001784">
    <property type="component" value="Chromosome"/>
</dbReference>
<dbReference type="GO" id="GO:1990904">
    <property type="term" value="C:ribonucleoprotein complex"/>
    <property type="evidence" value="ECO:0007669"/>
    <property type="project" value="UniProtKB-KW"/>
</dbReference>
<dbReference type="GO" id="GO:0005840">
    <property type="term" value="C:ribosome"/>
    <property type="evidence" value="ECO:0007669"/>
    <property type="project" value="UniProtKB-KW"/>
</dbReference>
<dbReference type="GO" id="GO:0003729">
    <property type="term" value="F:mRNA binding"/>
    <property type="evidence" value="ECO:0007669"/>
    <property type="project" value="TreeGrafter"/>
</dbReference>
<dbReference type="GO" id="GO:0003735">
    <property type="term" value="F:structural constituent of ribosome"/>
    <property type="evidence" value="ECO:0007669"/>
    <property type="project" value="InterPro"/>
</dbReference>
<dbReference type="GO" id="GO:0017148">
    <property type="term" value="P:negative regulation of translation"/>
    <property type="evidence" value="ECO:0007669"/>
    <property type="project" value="TreeGrafter"/>
</dbReference>
<dbReference type="GO" id="GO:0006412">
    <property type="term" value="P:translation"/>
    <property type="evidence" value="ECO:0007669"/>
    <property type="project" value="UniProtKB-UniRule"/>
</dbReference>
<dbReference type="CDD" id="cd00392">
    <property type="entry name" value="Ribosomal_L13"/>
    <property type="match status" value="1"/>
</dbReference>
<dbReference type="FunFam" id="3.90.1180.10:FF:000001">
    <property type="entry name" value="50S ribosomal protein L13"/>
    <property type="match status" value="1"/>
</dbReference>
<dbReference type="Gene3D" id="3.90.1180.10">
    <property type="entry name" value="Ribosomal protein L13"/>
    <property type="match status" value="1"/>
</dbReference>
<dbReference type="HAMAP" id="MF_01366">
    <property type="entry name" value="Ribosomal_uL13"/>
    <property type="match status" value="1"/>
</dbReference>
<dbReference type="InterPro" id="IPR005822">
    <property type="entry name" value="Ribosomal_uL13"/>
</dbReference>
<dbReference type="InterPro" id="IPR005823">
    <property type="entry name" value="Ribosomal_uL13_bac-type"/>
</dbReference>
<dbReference type="InterPro" id="IPR036899">
    <property type="entry name" value="Ribosomal_uL13_sf"/>
</dbReference>
<dbReference type="NCBIfam" id="TIGR01066">
    <property type="entry name" value="rplM_bact"/>
    <property type="match status" value="1"/>
</dbReference>
<dbReference type="PANTHER" id="PTHR11545:SF2">
    <property type="entry name" value="LARGE RIBOSOMAL SUBUNIT PROTEIN UL13M"/>
    <property type="match status" value="1"/>
</dbReference>
<dbReference type="PANTHER" id="PTHR11545">
    <property type="entry name" value="RIBOSOMAL PROTEIN L13"/>
    <property type="match status" value="1"/>
</dbReference>
<dbReference type="Pfam" id="PF00572">
    <property type="entry name" value="Ribosomal_L13"/>
    <property type="match status" value="1"/>
</dbReference>
<dbReference type="PIRSF" id="PIRSF002181">
    <property type="entry name" value="Ribosomal_L13"/>
    <property type="match status" value="1"/>
</dbReference>
<dbReference type="SUPFAM" id="SSF52161">
    <property type="entry name" value="Ribosomal protein L13"/>
    <property type="match status" value="1"/>
</dbReference>
<evidence type="ECO:0000255" key="1">
    <source>
        <dbReference type="HAMAP-Rule" id="MF_01366"/>
    </source>
</evidence>
<evidence type="ECO:0000305" key="2"/>
<sequence length="142" mass="16120">MKTISAKFEASQRKWILVDAENQVLGRLASRIAMRLRGKHLPAFTPHVDLGDFVVVINADKVQLTGNKWDQKLYYRHSGYMGGVKVQSARKLNAGNPEKLLRLAVWGMLPKNRLGRKLIKKLKVYKGAEHPHEAQQPTRIAL</sequence>
<organism>
    <name type="scientific">Syntrophobacter fumaroxidans (strain DSM 10017 / MPOB)</name>
    <dbReference type="NCBI Taxonomy" id="335543"/>
    <lineage>
        <taxon>Bacteria</taxon>
        <taxon>Pseudomonadati</taxon>
        <taxon>Thermodesulfobacteriota</taxon>
        <taxon>Syntrophobacteria</taxon>
        <taxon>Syntrophobacterales</taxon>
        <taxon>Syntrophobacteraceae</taxon>
        <taxon>Syntrophobacter</taxon>
    </lineage>
</organism>
<keyword id="KW-1185">Reference proteome</keyword>
<keyword id="KW-0687">Ribonucleoprotein</keyword>
<keyword id="KW-0689">Ribosomal protein</keyword>
<feature type="chain" id="PRO_1000067998" description="Large ribosomal subunit protein uL13">
    <location>
        <begin position="1"/>
        <end position="142"/>
    </location>
</feature>
<protein>
    <recommendedName>
        <fullName evidence="1">Large ribosomal subunit protein uL13</fullName>
    </recommendedName>
    <alternativeName>
        <fullName evidence="2">50S ribosomal protein L13</fullName>
    </alternativeName>
</protein>
<comment type="function">
    <text evidence="1">This protein is one of the early assembly proteins of the 50S ribosomal subunit, although it is not seen to bind rRNA by itself. It is important during the early stages of 50S assembly.</text>
</comment>
<comment type="subunit">
    <text evidence="1">Part of the 50S ribosomal subunit.</text>
</comment>
<comment type="similarity">
    <text evidence="1">Belongs to the universal ribosomal protein uL13 family.</text>
</comment>
<gene>
    <name evidence="1" type="primary">rplM</name>
    <name type="ordered locus">Sfum_1669</name>
</gene>
<proteinExistence type="inferred from homology"/>
<accession>A0LIV4</accession>
<reference key="1">
    <citation type="submission" date="2006-10" db="EMBL/GenBank/DDBJ databases">
        <title>Complete sequence of Syntrophobacter fumaroxidans MPOB.</title>
        <authorList>
            <consortium name="US DOE Joint Genome Institute"/>
            <person name="Copeland A."/>
            <person name="Lucas S."/>
            <person name="Lapidus A."/>
            <person name="Barry K."/>
            <person name="Detter J.C."/>
            <person name="Glavina del Rio T."/>
            <person name="Hammon N."/>
            <person name="Israni S."/>
            <person name="Pitluck S."/>
            <person name="Goltsman E.G."/>
            <person name="Martinez M."/>
            <person name="Schmutz J."/>
            <person name="Larimer F."/>
            <person name="Land M."/>
            <person name="Hauser L."/>
            <person name="Kyrpides N."/>
            <person name="Kim E."/>
            <person name="Boone D.R."/>
            <person name="Brockman F."/>
            <person name="Culley D."/>
            <person name="Ferry J."/>
            <person name="Gunsalus R."/>
            <person name="McInerney M.J."/>
            <person name="Morrison M."/>
            <person name="Plugge C."/>
            <person name="Rohlin L."/>
            <person name="Scholten J."/>
            <person name="Sieber J."/>
            <person name="Stams A.J.M."/>
            <person name="Worm P."/>
            <person name="Henstra A.M."/>
            <person name="Richardson P."/>
        </authorList>
    </citation>
    <scope>NUCLEOTIDE SEQUENCE [LARGE SCALE GENOMIC DNA]</scope>
    <source>
        <strain>DSM 10017 / MPOB</strain>
    </source>
</reference>